<gene>
    <name evidence="1" type="primary">rpmH</name>
    <name type="ordered locus">Spea_4260</name>
</gene>
<name>RL34_SHEPA</name>
<feature type="chain" id="PRO_1000080269" description="Large ribosomal subunit protein bL34">
    <location>
        <begin position="1"/>
        <end position="45"/>
    </location>
</feature>
<feature type="region of interest" description="Disordered" evidence="2">
    <location>
        <begin position="1"/>
        <end position="21"/>
    </location>
</feature>
<feature type="compositionally biased region" description="Polar residues" evidence="2">
    <location>
        <begin position="1"/>
        <end position="10"/>
    </location>
</feature>
<feature type="compositionally biased region" description="Basic residues" evidence="2">
    <location>
        <begin position="11"/>
        <end position="20"/>
    </location>
</feature>
<sequence length="45" mass="5153">MSKRTFQPSNLKRKRSHGFRARMATVGGRKVIARRRAKGRARLSA</sequence>
<dbReference type="EMBL" id="CP000851">
    <property type="protein sequence ID" value="ABV89570.1"/>
    <property type="molecule type" value="Genomic_DNA"/>
</dbReference>
<dbReference type="RefSeq" id="WP_011867659.1">
    <property type="nucleotide sequence ID" value="NC_009901.1"/>
</dbReference>
<dbReference type="SMR" id="A8HAI3"/>
<dbReference type="STRING" id="398579.Spea_4260"/>
<dbReference type="KEGG" id="spl:Spea_4260"/>
<dbReference type="eggNOG" id="COG0230">
    <property type="taxonomic scope" value="Bacteria"/>
</dbReference>
<dbReference type="HOGENOM" id="CLU_129938_2_0_6"/>
<dbReference type="OrthoDB" id="9804164at2"/>
<dbReference type="Proteomes" id="UP000002608">
    <property type="component" value="Chromosome"/>
</dbReference>
<dbReference type="GO" id="GO:1990904">
    <property type="term" value="C:ribonucleoprotein complex"/>
    <property type="evidence" value="ECO:0007669"/>
    <property type="project" value="UniProtKB-KW"/>
</dbReference>
<dbReference type="GO" id="GO:0005840">
    <property type="term" value="C:ribosome"/>
    <property type="evidence" value="ECO:0007669"/>
    <property type="project" value="UniProtKB-KW"/>
</dbReference>
<dbReference type="GO" id="GO:0003735">
    <property type="term" value="F:structural constituent of ribosome"/>
    <property type="evidence" value="ECO:0007669"/>
    <property type="project" value="InterPro"/>
</dbReference>
<dbReference type="GO" id="GO:0006412">
    <property type="term" value="P:translation"/>
    <property type="evidence" value="ECO:0007669"/>
    <property type="project" value="UniProtKB-UniRule"/>
</dbReference>
<dbReference type="FunFam" id="1.10.287.3980:FF:000001">
    <property type="entry name" value="Mitochondrial ribosomal protein L34"/>
    <property type="match status" value="1"/>
</dbReference>
<dbReference type="Gene3D" id="1.10.287.3980">
    <property type="match status" value="1"/>
</dbReference>
<dbReference type="HAMAP" id="MF_00391">
    <property type="entry name" value="Ribosomal_bL34"/>
    <property type="match status" value="1"/>
</dbReference>
<dbReference type="InterPro" id="IPR000271">
    <property type="entry name" value="Ribosomal_bL34"/>
</dbReference>
<dbReference type="InterPro" id="IPR020939">
    <property type="entry name" value="Ribosomal_bL34_CS"/>
</dbReference>
<dbReference type="NCBIfam" id="TIGR01030">
    <property type="entry name" value="rpmH_bact"/>
    <property type="match status" value="1"/>
</dbReference>
<dbReference type="PANTHER" id="PTHR14503:SF4">
    <property type="entry name" value="LARGE RIBOSOMAL SUBUNIT PROTEIN BL34M"/>
    <property type="match status" value="1"/>
</dbReference>
<dbReference type="PANTHER" id="PTHR14503">
    <property type="entry name" value="MITOCHONDRIAL RIBOSOMAL PROTEIN 34 FAMILY MEMBER"/>
    <property type="match status" value="1"/>
</dbReference>
<dbReference type="Pfam" id="PF00468">
    <property type="entry name" value="Ribosomal_L34"/>
    <property type="match status" value="1"/>
</dbReference>
<dbReference type="PROSITE" id="PS00784">
    <property type="entry name" value="RIBOSOMAL_L34"/>
    <property type="match status" value="1"/>
</dbReference>
<keyword id="KW-1185">Reference proteome</keyword>
<keyword id="KW-0687">Ribonucleoprotein</keyword>
<keyword id="KW-0689">Ribosomal protein</keyword>
<protein>
    <recommendedName>
        <fullName evidence="1">Large ribosomal subunit protein bL34</fullName>
    </recommendedName>
    <alternativeName>
        <fullName evidence="3">50S ribosomal protein L34</fullName>
    </alternativeName>
</protein>
<proteinExistence type="inferred from homology"/>
<comment type="similarity">
    <text evidence="1">Belongs to the bacterial ribosomal protein bL34 family.</text>
</comment>
<evidence type="ECO:0000255" key="1">
    <source>
        <dbReference type="HAMAP-Rule" id="MF_00391"/>
    </source>
</evidence>
<evidence type="ECO:0000256" key="2">
    <source>
        <dbReference type="SAM" id="MobiDB-lite"/>
    </source>
</evidence>
<evidence type="ECO:0000305" key="3"/>
<accession>A8HAI3</accession>
<reference key="1">
    <citation type="submission" date="2007-10" db="EMBL/GenBank/DDBJ databases">
        <title>Complete sequence of Shewanella pealeana ATCC 700345.</title>
        <authorList>
            <consortium name="US DOE Joint Genome Institute"/>
            <person name="Copeland A."/>
            <person name="Lucas S."/>
            <person name="Lapidus A."/>
            <person name="Barry K."/>
            <person name="Glavina del Rio T."/>
            <person name="Dalin E."/>
            <person name="Tice H."/>
            <person name="Pitluck S."/>
            <person name="Chertkov O."/>
            <person name="Brettin T."/>
            <person name="Bruce D."/>
            <person name="Detter J.C."/>
            <person name="Han C."/>
            <person name="Schmutz J."/>
            <person name="Larimer F."/>
            <person name="Land M."/>
            <person name="Hauser L."/>
            <person name="Kyrpides N."/>
            <person name="Kim E."/>
            <person name="Zhao J.-S.Z."/>
            <person name="Manno D."/>
            <person name="Hawari J."/>
            <person name="Richardson P."/>
        </authorList>
    </citation>
    <scope>NUCLEOTIDE SEQUENCE [LARGE SCALE GENOMIC DNA]</scope>
    <source>
        <strain>ATCC 700345 / ANG-SQ1</strain>
    </source>
</reference>
<organism>
    <name type="scientific">Shewanella pealeana (strain ATCC 700345 / ANG-SQ1)</name>
    <dbReference type="NCBI Taxonomy" id="398579"/>
    <lineage>
        <taxon>Bacteria</taxon>
        <taxon>Pseudomonadati</taxon>
        <taxon>Pseudomonadota</taxon>
        <taxon>Gammaproteobacteria</taxon>
        <taxon>Alteromonadales</taxon>
        <taxon>Shewanellaceae</taxon>
        <taxon>Shewanella</taxon>
    </lineage>
</organism>